<protein>
    <recommendedName>
        <fullName>Caffeoyl-CoA O-methyltransferase</fullName>
        <ecNumber>2.1.1.104</ecNumber>
    </recommendedName>
    <alternativeName>
        <fullName>Trans-caffeoyl-CoA 3-O-methyltransferase</fullName>
        <shortName>CCoAMT</shortName>
        <shortName>CCoAOMT</shortName>
    </alternativeName>
</protein>
<proteinExistence type="evidence at transcript level"/>
<sequence length="259" mass="29146">MASTSVAAAEVKAQTTQAEEPVKVVRHQEVGHKSLLQSDALYQYILETSVYPREPEPMKELPRVTAKHPWNLMTTSADEGQFLGLLLKLINAKNTMEIGVYTGYSLLSTALALPDDGKILAMDINRENYDIGLPIIEKAGVAHKIDFREGPALPVLDELLKNEDMHGSFDFVFVDRDKDNYLNYHKRLIDLVKVGGLIAYDNTLWNGSVVAPPDAPLRKYVRYYRDFVMELNKALAVDPRIEISQIPVLDGVTLCRRVY</sequence>
<reference key="1">
    <citation type="journal article" date="1999" name="Plant Mol. Biol.">
        <title>Secondary xylem-specific expression of caffeoyl-coenzyme A 3-O-methyltransferase plays an important role in the methylation pathway associated with lignin biosynthesis in loblolly pine.</title>
        <authorList>
            <person name="Li L."/>
            <person name="Osakabe Y."/>
            <person name="Joshi C.P."/>
            <person name="Chiang V.L.C."/>
        </authorList>
    </citation>
    <scope>NUCLEOTIDE SEQUENCE [MRNA]</scope>
    <source>
        <tissue>Xylem</tissue>
    </source>
</reference>
<evidence type="ECO:0000250" key="1">
    <source>
        <dbReference type="UniProtKB" id="Q40313"/>
    </source>
</evidence>
<evidence type="ECO:0000255" key="2">
    <source>
        <dbReference type="PROSITE-ProRule" id="PRU01019"/>
    </source>
</evidence>
<dbReference type="EC" id="2.1.1.104"/>
<dbReference type="EMBL" id="AF036095">
    <property type="protein sequence ID" value="AAD02050.1"/>
    <property type="molecule type" value="mRNA"/>
</dbReference>
<dbReference type="SMR" id="Q9ZTT5"/>
<dbReference type="UniPathway" id="UPA00711"/>
<dbReference type="GO" id="GO:0042409">
    <property type="term" value="F:caffeoyl-CoA O-methyltransferase activity"/>
    <property type="evidence" value="ECO:0007669"/>
    <property type="project" value="UniProtKB-EC"/>
</dbReference>
<dbReference type="GO" id="GO:0046872">
    <property type="term" value="F:metal ion binding"/>
    <property type="evidence" value="ECO:0007669"/>
    <property type="project" value="UniProtKB-KW"/>
</dbReference>
<dbReference type="GO" id="GO:0009809">
    <property type="term" value="P:lignin biosynthetic process"/>
    <property type="evidence" value="ECO:0007669"/>
    <property type="project" value="UniProtKB-KW"/>
</dbReference>
<dbReference type="GO" id="GO:0032259">
    <property type="term" value="P:methylation"/>
    <property type="evidence" value="ECO:0007669"/>
    <property type="project" value="UniProtKB-KW"/>
</dbReference>
<dbReference type="FunFam" id="3.40.50.150:FF:000147">
    <property type="entry name" value="Caffeoyl-CoA O-methyltransferase 1"/>
    <property type="match status" value="1"/>
</dbReference>
<dbReference type="Gene3D" id="3.40.50.150">
    <property type="entry name" value="Vaccinia Virus protein VP39"/>
    <property type="match status" value="1"/>
</dbReference>
<dbReference type="InterPro" id="IPR050362">
    <property type="entry name" value="Cation-dep_OMT"/>
</dbReference>
<dbReference type="InterPro" id="IPR029063">
    <property type="entry name" value="SAM-dependent_MTases_sf"/>
</dbReference>
<dbReference type="InterPro" id="IPR002935">
    <property type="entry name" value="SAM_O-MeTrfase"/>
</dbReference>
<dbReference type="PANTHER" id="PTHR10509:SF74">
    <property type="entry name" value="CAFFEOYL-COA O-METHYLTRANSFERASE 2"/>
    <property type="match status" value="1"/>
</dbReference>
<dbReference type="PANTHER" id="PTHR10509">
    <property type="entry name" value="O-METHYLTRANSFERASE-RELATED"/>
    <property type="match status" value="1"/>
</dbReference>
<dbReference type="Pfam" id="PF01596">
    <property type="entry name" value="Methyltransf_3"/>
    <property type="match status" value="1"/>
</dbReference>
<dbReference type="SUPFAM" id="SSF53335">
    <property type="entry name" value="S-adenosyl-L-methionine-dependent methyltransferases"/>
    <property type="match status" value="1"/>
</dbReference>
<dbReference type="PROSITE" id="PS51682">
    <property type="entry name" value="SAM_OMT_I"/>
    <property type="match status" value="1"/>
</dbReference>
<feature type="chain" id="PRO_0000165690" description="Caffeoyl-CoA O-methyltransferase">
    <location>
        <begin position="1"/>
        <end position="259"/>
    </location>
</feature>
<feature type="binding site" evidence="1">
    <location>
        <position position="33"/>
    </location>
    <ligand>
        <name>substrate</name>
    </ligand>
</feature>
<feature type="binding site" evidence="2">
    <location>
        <position position="75"/>
    </location>
    <ligand>
        <name>S-adenosyl-L-methionine</name>
        <dbReference type="ChEBI" id="CHEBI:59789"/>
    </ligand>
</feature>
<feature type="binding site" evidence="2">
    <location>
        <position position="97"/>
    </location>
    <ligand>
        <name>S-adenosyl-L-methionine</name>
        <dbReference type="ChEBI" id="CHEBI:59789"/>
    </ligand>
</feature>
<feature type="binding site" evidence="2">
    <location>
        <begin position="99"/>
        <end position="100"/>
    </location>
    <ligand>
        <name>S-adenosyl-L-methionine</name>
        <dbReference type="ChEBI" id="CHEBI:59789"/>
    </ligand>
</feature>
<feature type="binding site" evidence="2">
    <location>
        <position position="105"/>
    </location>
    <ligand>
        <name>S-adenosyl-L-methionine</name>
        <dbReference type="ChEBI" id="CHEBI:59789"/>
    </ligand>
</feature>
<feature type="binding site" evidence="2">
    <location>
        <position position="123"/>
    </location>
    <ligand>
        <name>S-adenosyl-L-methionine</name>
        <dbReference type="ChEBI" id="CHEBI:59789"/>
    </ligand>
</feature>
<feature type="binding site" evidence="2">
    <location>
        <position position="152"/>
    </location>
    <ligand>
        <name>S-adenosyl-L-methionine</name>
        <dbReference type="ChEBI" id="CHEBI:59789"/>
    </ligand>
</feature>
<feature type="binding site" evidence="2">
    <location>
        <position position="175"/>
    </location>
    <ligand>
        <name>a divalent metal cation</name>
        <dbReference type="ChEBI" id="CHEBI:60240"/>
    </ligand>
</feature>
<feature type="binding site" evidence="1">
    <location>
        <position position="175"/>
    </location>
    <ligand>
        <name>substrate</name>
    </ligand>
</feature>
<feature type="binding site" evidence="2">
    <location>
        <position position="177"/>
    </location>
    <ligand>
        <name>S-adenosyl-L-methionine</name>
        <dbReference type="ChEBI" id="CHEBI:59789"/>
    </ligand>
</feature>
<feature type="binding site" evidence="2">
    <location>
        <position position="201"/>
    </location>
    <ligand>
        <name>a divalent metal cation</name>
        <dbReference type="ChEBI" id="CHEBI:60240"/>
    </ligand>
</feature>
<feature type="binding site" evidence="2">
    <location>
        <position position="202"/>
    </location>
    <ligand>
        <name>a divalent metal cation</name>
        <dbReference type="ChEBI" id="CHEBI:60240"/>
    </ligand>
</feature>
<feature type="binding site" evidence="1">
    <location>
        <position position="206"/>
    </location>
    <ligand>
        <name>substrate</name>
    </ligand>
</feature>
<gene>
    <name type="primary">CCOAOMT</name>
</gene>
<name>CAMT_PINTA</name>
<keyword id="KW-0438">Lignin biosynthesis</keyword>
<keyword id="KW-0479">Metal-binding</keyword>
<keyword id="KW-0489">Methyltransferase</keyword>
<keyword id="KW-0949">S-adenosyl-L-methionine</keyword>
<keyword id="KW-0808">Transferase</keyword>
<organism>
    <name type="scientific">Pinus taeda</name>
    <name type="common">Loblolly pine</name>
    <dbReference type="NCBI Taxonomy" id="3352"/>
    <lineage>
        <taxon>Eukaryota</taxon>
        <taxon>Viridiplantae</taxon>
        <taxon>Streptophyta</taxon>
        <taxon>Embryophyta</taxon>
        <taxon>Tracheophyta</taxon>
        <taxon>Spermatophyta</taxon>
        <taxon>Pinopsida</taxon>
        <taxon>Pinidae</taxon>
        <taxon>Conifers I</taxon>
        <taxon>Pinales</taxon>
        <taxon>Pinaceae</taxon>
        <taxon>Pinus</taxon>
        <taxon>Pinus subgen. Pinus</taxon>
    </lineage>
</organism>
<comment type="function">
    <text>Methylates caffeoyl-CoA to feruloyl-CoA and 5-hydroxyferuloyl-CoA to sinapoyl-CoA. Plays a role in the synthesis of feruloylated polysaccharides. Involved in the reinforcement of the plant cell wall. Also involved in the responding to wounding or pathogen challenge by the increased formation of cell wall-bound ferulic acid polymers.</text>
</comment>
<comment type="catalytic activity">
    <reaction>
        <text>(E)-caffeoyl-CoA + S-adenosyl-L-methionine = (E)-feruloyl-CoA + S-adenosyl-L-homocysteine + H(+)</text>
        <dbReference type="Rhea" id="RHEA:16925"/>
        <dbReference type="ChEBI" id="CHEBI:15378"/>
        <dbReference type="ChEBI" id="CHEBI:57856"/>
        <dbReference type="ChEBI" id="CHEBI:59789"/>
        <dbReference type="ChEBI" id="CHEBI:87136"/>
        <dbReference type="ChEBI" id="CHEBI:87305"/>
        <dbReference type="EC" id="2.1.1.104"/>
    </reaction>
</comment>
<comment type="cofactor">
    <cofactor evidence="1">
        <name>a divalent metal cation</name>
        <dbReference type="ChEBI" id="CHEBI:60240"/>
    </cofactor>
    <text evidence="1">Binds 1 divalent metal cation per subunit.</text>
</comment>
<comment type="pathway">
    <text>Aromatic compound metabolism; phenylpropanoid biosynthesis.</text>
</comment>
<comment type="similarity">
    <text evidence="2">Belongs to the class I-like SAM-binding methyltransferase superfamily. Cation-dependent O-methyltransferase family. CCoAMT subfamily.</text>
</comment>
<accession>Q9ZTT5</accession>